<name>RL15_RUMCH</name>
<keyword id="KW-1185">Reference proteome</keyword>
<keyword id="KW-0687">Ribonucleoprotein</keyword>
<keyword id="KW-0689">Ribosomal protein</keyword>
<keyword id="KW-0694">RNA-binding</keyword>
<keyword id="KW-0699">rRNA-binding</keyword>
<evidence type="ECO:0000255" key="1">
    <source>
        <dbReference type="HAMAP-Rule" id="MF_01341"/>
    </source>
</evidence>
<evidence type="ECO:0000256" key="2">
    <source>
        <dbReference type="SAM" id="MobiDB-lite"/>
    </source>
</evidence>
<evidence type="ECO:0000305" key="3"/>
<dbReference type="EMBL" id="CP001348">
    <property type="protein sequence ID" value="ACL75155.1"/>
    <property type="molecule type" value="Genomic_DNA"/>
</dbReference>
<dbReference type="RefSeq" id="WP_015924319.1">
    <property type="nucleotide sequence ID" value="NC_011898.1"/>
</dbReference>
<dbReference type="SMR" id="B8I7Z8"/>
<dbReference type="STRING" id="394503.Ccel_0777"/>
<dbReference type="KEGG" id="cce:Ccel_0777"/>
<dbReference type="eggNOG" id="COG0200">
    <property type="taxonomic scope" value="Bacteria"/>
</dbReference>
<dbReference type="HOGENOM" id="CLU_055188_4_2_9"/>
<dbReference type="OrthoDB" id="9810293at2"/>
<dbReference type="Proteomes" id="UP000001349">
    <property type="component" value="Chromosome"/>
</dbReference>
<dbReference type="GO" id="GO:0022625">
    <property type="term" value="C:cytosolic large ribosomal subunit"/>
    <property type="evidence" value="ECO:0007669"/>
    <property type="project" value="TreeGrafter"/>
</dbReference>
<dbReference type="GO" id="GO:0019843">
    <property type="term" value="F:rRNA binding"/>
    <property type="evidence" value="ECO:0007669"/>
    <property type="project" value="UniProtKB-UniRule"/>
</dbReference>
<dbReference type="GO" id="GO:0003735">
    <property type="term" value="F:structural constituent of ribosome"/>
    <property type="evidence" value="ECO:0007669"/>
    <property type="project" value="InterPro"/>
</dbReference>
<dbReference type="GO" id="GO:0006412">
    <property type="term" value="P:translation"/>
    <property type="evidence" value="ECO:0007669"/>
    <property type="project" value="UniProtKB-UniRule"/>
</dbReference>
<dbReference type="Gene3D" id="3.100.10.10">
    <property type="match status" value="1"/>
</dbReference>
<dbReference type="HAMAP" id="MF_01341">
    <property type="entry name" value="Ribosomal_uL15"/>
    <property type="match status" value="1"/>
</dbReference>
<dbReference type="InterPro" id="IPR030878">
    <property type="entry name" value="Ribosomal_uL15"/>
</dbReference>
<dbReference type="InterPro" id="IPR021131">
    <property type="entry name" value="Ribosomal_uL15/eL18"/>
</dbReference>
<dbReference type="InterPro" id="IPR036227">
    <property type="entry name" value="Ribosomal_uL15/eL18_sf"/>
</dbReference>
<dbReference type="InterPro" id="IPR005749">
    <property type="entry name" value="Ribosomal_uL15_bac-type"/>
</dbReference>
<dbReference type="NCBIfam" id="TIGR01071">
    <property type="entry name" value="rplO_bact"/>
    <property type="match status" value="1"/>
</dbReference>
<dbReference type="PANTHER" id="PTHR12934">
    <property type="entry name" value="50S RIBOSOMAL PROTEIN L15"/>
    <property type="match status" value="1"/>
</dbReference>
<dbReference type="PANTHER" id="PTHR12934:SF11">
    <property type="entry name" value="LARGE RIBOSOMAL SUBUNIT PROTEIN UL15M"/>
    <property type="match status" value="1"/>
</dbReference>
<dbReference type="Pfam" id="PF00828">
    <property type="entry name" value="Ribosomal_L27A"/>
    <property type="match status" value="1"/>
</dbReference>
<dbReference type="SUPFAM" id="SSF52080">
    <property type="entry name" value="Ribosomal proteins L15p and L18e"/>
    <property type="match status" value="1"/>
</dbReference>
<reference key="1">
    <citation type="submission" date="2009-01" db="EMBL/GenBank/DDBJ databases">
        <title>Complete sequence of Clostridium cellulolyticum H10.</title>
        <authorList>
            <consortium name="US DOE Joint Genome Institute"/>
            <person name="Lucas S."/>
            <person name="Copeland A."/>
            <person name="Lapidus A."/>
            <person name="Glavina del Rio T."/>
            <person name="Dalin E."/>
            <person name="Tice H."/>
            <person name="Bruce D."/>
            <person name="Goodwin L."/>
            <person name="Pitluck S."/>
            <person name="Chertkov O."/>
            <person name="Saunders E."/>
            <person name="Brettin T."/>
            <person name="Detter J.C."/>
            <person name="Han C."/>
            <person name="Larimer F."/>
            <person name="Land M."/>
            <person name="Hauser L."/>
            <person name="Kyrpides N."/>
            <person name="Ivanova N."/>
            <person name="Zhou J."/>
            <person name="Richardson P."/>
        </authorList>
    </citation>
    <scope>NUCLEOTIDE SEQUENCE [LARGE SCALE GENOMIC DNA]</scope>
    <source>
        <strain>ATCC 35319 / DSM 5812 / JCM 6584 / H10</strain>
    </source>
</reference>
<gene>
    <name evidence="1" type="primary">rplO</name>
    <name type="ordered locus">Ccel_0777</name>
</gene>
<comment type="function">
    <text evidence="1">Binds to the 23S rRNA.</text>
</comment>
<comment type="subunit">
    <text evidence="1">Part of the 50S ribosomal subunit.</text>
</comment>
<comment type="similarity">
    <text evidence="1">Belongs to the universal ribosomal protein uL15 family.</text>
</comment>
<feature type="chain" id="PRO_1000166285" description="Large ribosomal subunit protein uL15">
    <location>
        <begin position="1"/>
        <end position="147"/>
    </location>
</feature>
<feature type="region of interest" description="Disordered" evidence="2">
    <location>
        <begin position="1"/>
        <end position="54"/>
    </location>
</feature>
<feature type="compositionally biased region" description="Gly residues" evidence="2">
    <location>
        <begin position="22"/>
        <end position="31"/>
    </location>
</feature>
<feature type="compositionally biased region" description="Gly residues" evidence="2">
    <location>
        <begin position="42"/>
        <end position="52"/>
    </location>
</feature>
<organism>
    <name type="scientific">Ruminiclostridium cellulolyticum (strain ATCC 35319 / DSM 5812 / JCM 6584 / H10)</name>
    <name type="common">Clostridium cellulolyticum</name>
    <dbReference type="NCBI Taxonomy" id="394503"/>
    <lineage>
        <taxon>Bacteria</taxon>
        <taxon>Bacillati</taxon>
        <taxon>Bacillota</taxon>
        <taxon>Clostridia</taxon>
        <taxon>Eubacteriales</taxon>
        <taxon>Oscillospiraceae</taxon>
        <taxon>Ruminiclostridium</taxon>
    </lineage>
</organism>
<proteinExistence type="inferred from homology"/>
<accession>B8I7Z8</accession>
<protein>
    <recommendedName>
        <fullName evidence="1">Large ribosomal subunit protein uL15</fullName>
    </recommendedName>
    <alternativeName>
        <fullName evidence="3">50S ribosomal protein L15</fullName>
    </alternativeName>
</protein>
<sequence>MKLFELQPAPGSKKLPNRKGRGIGSGNGKTGGRGHKGQNARAGGGVRPGFEGGQMPLYMRLPKRGFNNYEFSKKYTEVNVSDLNIFDEGTVVTEELLKSSGLAKKIIDGVAILGNGELTKKLTVQATKFTKTATEKIEAAGGKVEVV</sequence>